<organism>
    <name type="scientific">Lactococcus lactis subsp. lactis (strain IL1403)</name>
    <name type="common">Streptococcus lactis</name>
    <dbReference type="NCBI Taxonomy" id="272623"/>
    <lineage>
        <taxon>Bacteria</taxon>
        <taxon>Bacillati</taxon>
        <taxon>Bacillota</taxon>
        <taxon>Bacilli</taxon>
        <taxon>Lactobacillales</taxon>
        <taxon>Streptococcaceae</taxon>
        <taxon>Lactococcus</taxon>
    </lineage>
</organism>
<dbReference type="EMBL" id="AE005176">
    <property type="protein sequence ID" value="AAK06098.1"/>
    <property type="molecule type" value="Genomic_DNA"/>
</dbReference>
<dbReference type="PIR" id="H86874">
    <property type="entry name" value="H86874"/>
</dbReference>
<dbReference type="RefSeq" id="NP_268157.1">
    <property type="nucleotide sequence ID" value="NC_002662.1"/>
</dbReference>
<dbReference type="RefSeq" id="WP_004254644.1">
    <property type="nucleotide sequence ID" value="NC_002662.1"/>
</dbReference>
<dbReference type="SMR" id="Q9CE47"/>
<dbReference type="PaxDb" id="272623-L0399"/>
<dbReference type="EnsemblBacteria" id="AAK06098">
    <property type="protein sequence ID" value="AAK06098"/>
    <property type="gene ID" value="L0399"/>
</dbReference>
<dbReference type="GeneID" id="89634356"/>
<dbReference type="KEGG" id="lla:L0399"/>
<dbReference type="PATRIC" id="fig|272623.7.peg.2155"/>
<dbReference type="eggNOG" id="COG0081">
    <property type="taxonomic scope" value="Bacteria"/>
</dbReference>
<dbReference type="HOGENOM" id="CLU_062853_0_0_9"/>
<dbReference type="OrthoDB" id="9803740at2"/>
<dbReference type="Proteomes" id="UP000002196">
    <property type="component" value="Chromosome"/>
</dbReference>
<dbReference type="GO" id="GO:0015934">
    <property type="term" value="C:large ribosomal subunit"/>
    <property type="evidence" value="ECO:0007669"/>
    <property type="project" value="InterPro"/>
</dbReference>
<dbReference type="GO" id="GO:0019843">
    <property type="term" value="F:rRNA binding"/>
    <property type="evidence" value="ECO:0007669"/>
    <property type="project" value="UniProtKB-UniRule"/>
</dbReference>
<dbReference type="GO" id="GO:0003735">
    <property type="term" value="F:structural constituent of ribosome"/>
    <property type="evidence" value="ECO:0007669"/>
    <property type="project" value="InterPro"/>
</dbReference>
<dbReference type="GO" id="GO:0000049">
    <property type="term" value="F:tRNA binding"/>
    <property type="evidence" value="ECO:0007669"/>
    <property type="project" value="UniProtKB-KW"/>
</dbReference>
<dbReference type="GO" id="GO:0006417">
    <property type="term" value="P:regulation of translation"/>
    <property type="evidence" value="ECO:0007669"/>
    <property type="project" value="UniProtKB-KW"/>
</dbReference>
<dbReference type="GO" id="GO:0006412">
    <property type="term" value="P:translation"/>
    <property type="evidence" value="ECO:0007669"/>
    <property type="project" value="UniProtKB-UniRule"/>
</dbReference>
<dbReference type="CDD" id="cd00403">
    <property type="entry name" value="Ribosomal_L1"/>
    <property type="match status" value="1"/>
</dbReference>
<dbReference type="FunFam" id="3.40.50.790:FF:000001">
    <property type="entry name" value="50S ribosomal protein L1"/>
    <property type="match status" value="1"/>
</dbReference>
<dbReference type="Gene3D" id="3.30.190.20">
    <property type="match status" value="1"/>
</dbReference>
<dbReference type="Gene3D" id="3.40.50.790">
    <property type="match status" value="1"/>
</dbReference>
<dbReference type="HAMAP" id="MF_01318_B">
    <property type="entry name" value="Ribosomal_uL1_B"/>
    <property type="match status" value="1"/>
</dbReference>
<dbReference type="InterPro" id="IPR005878">
    <property type="entry name" value="Ribosom_uL1_bac-type"/>
</dbReference>
<dbReference type="InterPro" id="IPR002143">
    <property type="entry name" value="Ribosomal_uL1"/>
</dbReference>
<dbReference type="InterPro" id="IPR023674">
    <property type="entry name" value="Ribosomal_uL1-like"/>
</dbReference>
<dbReference type="InterPro" id="IPR028364">
    <property type="entry name" value="Ribosomal_uL1/biogenesis"/>
</dbReference>
<dbReference type="InterPro" id="IPR016095">
    <property type="entry name" value="Ribosomal_uL1_3-a/b-sand"/>
</dbReference>
<dbReference type="InterPro" id="IPR023673">
    <property type="entry name" value="Ribosomal_uL1_CS"/>
</dbReference>
<dbReference type="NCBIfam" id="TIGR01169">
    <property type="entry name" value="rplA_bact"/>
    <property type="match status" value="1"/>
</dbReference>
<dbReference type="PANTHER" id="PTHR36427">
    <property type="entry name" value="54S RIBOSOMAL PROTEIN L1, MITOCHONDRIAL"/>
    <property type="match status" value="1"/>
</dbReference>
<dbReference type="PANTHER" id="PTHR36427:SF3">
    <property type="entry name" value="LARGE RIBOSOMAL SUBUNIT PROTEIN UL1M"/>
    <property type="match status" value="1"/>
</dbReference>
<dbReference type="Pfam" id="PF00687">
    <property type="entry name" value="Ribosomal_L1"/>
    <property type="match status" value="1"/>
</dbReference>
<dbReference type="PIRSF" id="PIRSF002155">
    <property type="entry name" value="Ribosomal_L1"/>
    <property type="match status" value="1"/>
</dbReference>
<dbReference type="SUPFAM" id="SSF56808">
    <property type="entry name" value="Ribosomal protein L1"/>
    <property type="match status" value="1"/>
</dbReference>
<dbReference type="PROSITE" id="PS01199">
    <property type="entry name" value="RIBOSOMAL_L1"/>
    <property type="match status" value="1"/>
</dbReference>
<name>RL1_LACLA</name>
<sequence>MAKKSKALRAAIEKIDATKLYSVEEAVALAKETSFAKFDATVEVAYNLNIDVKKSDQQIRGAMVLPNGTGKTARVLVFAKGAKAEEATAAGADFVGSDELVAKINGGWLDFDVVIATPDMMAVVGRLGRVLGPRNLMPNPKTGTVTMDVTKAVEESKAGKVNYRADKAGNVHVPIGKVSFDTEKLVENFKALNSVIAAAKPAASKGAYITNLSVTTTMGPGVKVDSASF</sequence>
<keyword id="KW-1185">Reference proteome</keyword>
<keyword id="KW-0678">Repressor</keyword>
<keyword id="KW-0687">Ribonucleoprotein</keyword>
<keyword id="KW-0689">Ribosomal protein</keyword>
<keyword id="KW-0694">RNA-binding</keyword>
<keyword id="KW-0699">rRNA-binding</keyword>
<keyword id="KW-0810">Translation regulation</keyword>
<keyword id="KW-0820">tRNA-binding</keyword>
<evidence type="ECO:0000255" key="1">
    <source>
        <dbReference type="HAMAP-Rule" id="MF_01318"/>
    </source>
</evidence>
<evidence type="ECO:0000305" key="2"/>
<accession>Q9CE47</accession>
<proteinExistence type="inferred from homology"/>
<reference key="1">
    <citation type="journal article" date="2001" name="Genome Res.">
        <title>The complete genome sequence of the lactic acid bacterium Lactococcus lactis ssp. lactis IL1403.</title>
        <authorList>
            <person name="Bolotin A."/>
            <person name="Wincker P."/>
            <person name="Mauger S."/>
            <person name="Jaillon O."/>
            <person name="Malarme K."/>
            <person name="Weissenbach J."/>
            <person name="Ehrlich S.D."/>
            <person name="Sorokin A."/>
        </authorList>
    </citation>
    <scope>NUCLEOTIDE SEQUENCE [LARGE SCALE GENOMIC DNA]</scope>
    <source>
        <strain>IL1403</strain>
    </source>
</reference>
<comment type="function">
    <text evidence="1">Binds directly to 23S rRNA. The L1 stalk is quite mobile in the ribosome, and is involved in E site tRNA release.</text>
</comment>
<comment type="function">
    <text evidence="1">Protein L1 is also a translational repressor protein, it controls the translation of the L11 operon by binding to its mRNA.</text>
</comment>
<comment type="subunit">
    <text evidence="1">Part of the 50S ribosomal subunit.</text>
</comment>
<comment type="similarity">
    <text evidence="1">Belongs to the universal ribosomal protein uL1 family.</text>
</comment>
<feature type="chain" id="PRO_0000125671" description="Large ribosomal subunit protein uL1">
    <location>
        <begin position="1"/>
        <end position="229"/>
    </location>
</feature>
<gene>
    <name evidence="1" type="primary">rplA</name>
    <name type="ordered locus">LL2000</name>
    <name type="ORF">L0399</name>
</gene>
<protein>
    <recommendedName>
        <fullName evidence="1">Large ribosomal subunit protein uL1</fullName>
    </recommendedName>
    <alternativeName>
        <fullName evidence="2">50S ribosomal protein L1</fullName>
    </alternativeName>
</protein>